<reference key="1">
    <citation type="journal article" date="2005" name="Science">
        <title>The transcriptional landscape of the mammalian genome.</title>
        <authorList>
            <person name="Carninci P."/>
            <person name="Kasukawa T."/>
            <person name="Katayama S."/>
            <person name="Gough J."/>
            <person name="Frith M.C."/>
            <person name="Maeda N."/>
            <person name="Oyama R."/>
            <person name="Ravasi T."/>
            <person name="Lenhard B."/>
            <person name="Wells C."/>
            <person name="Kodzius R."/>
            <person name="Shimokawa K."/>
            <person name="Bajic V.B."/>
            <person name="Brenner S.E."/>
            <person name="Batalov S."/>
            <person name="Forrest A.R."/>
            <person name="Zavolan M."/>
            <person name="Davis M.J."/>
            <person name="Wilming L.G."/>
            <person name="Aidinis V."/>
            <person name="Allen J.E."/>
            <person name="Ambesi-Impiombato A."/>
            <person name="Apweiler R."/>
            <person name="Aturaliya R.N."/>
            <person name="Bailey T.L."/>
            <person name="Bansal M."/>
            <person name="Baxter L."/>
            <person name="Beisel K.W."/>
            <person name="Bersano T."/>
            <person name="Bono H."/>
            <person name="Chalk A.M."/>
            <person name="Chiu K.P."/>
            <person name="Choudhary V."/>
            <person name="Christoffels A."/>
            <person name="Clutterbuck D.R."/>
            <person name="Crowe M.L."/>
            <person name="Dalla E."/>
            <person name="Dalrymple B.P."/>
            <person name="de Bono B."/>
            <person name="Della Gatta G."/>
            <person name="di Bernardo D."/>
            <person name="Down T."/>
            <person name="Engstrom P."/>
            <person name="Fagiolini M."/>
            <person name="Faulkner G."/>
            <person name="Fletcher C.F."/>
            <person name="Fukushima T."/>
            <person name="Furuno M."/>
            <person name="Futaki S."/>
            <person name="Gariboldi M."/>
            <person name="Georgii-Hemming P."/>
            <person name="Gingeras T.R."/>
            <person name="Gojobori T."/>
            <person name="Green R.E."/>
            <person name="Gustincich S."/>
            <person name="Harbers M."/>
            <person name="Hayashi Y."/>
            <person name="Hensch T.K."/>
            <person name="Hirokawa N."/>
            <person name="Hill D."/>
            <person name="Huminiecki L."/>
            <person name="Iacono M."/>
            <person name="Ikeo K."/>
            <person name="Iwama A."/>
            <person name="Ishikawa T."/>
            <person name="Jakt M."/>
            <person name="Kanapin A."/>
            <person name="Katoh M."/>
            <person name="Kawasawa Y."/>
            <person name="Kelso J."/>
            <person name="Kitamura H."/>
            <person name="Kitano H."/>
            <person name="Kollias G."/>
            <person name="Krishnan S.P."/>
            <person name="Kruger A."/>
            <person name="Kummerfeld S.K."/>
            <person name="Kurochkin I.V."/>
            <person name="Lareau L.F."/>
            <person name="Lazarevic D."/>
            <person name="Lipovich L."/>
            <person name="Liu J."/>
            <person name="Liuni S."/>
            <person name="McWilliam S."/>
            <person name="Madan Babu M."/>
            <person name="Madera M."/>
            <person name="Marchionni L."/>
            <person name="Matsuda H."/>
            <person name="Matsuzawa S."/>
            <person name="Miki H."/>
            <person name="Mignone F."/>
            <person name="Miyake S."/>
            <person name="Morris K."/>
            <person name="Mottagui-Tabar S."/>
            <person name="Mulder N."/>
            <person name="Nakano N."/>
            <person name="Nakauchi H."/>
            <person name="Ng P."/>
            <person name="Nilsson R."/>
            <person name="Nishiguchi S."/>
            <person name="Nishikawa S."/>
            <person name="Nori F."/>
            <person name="Ohara O."/>
            <person name="Okazaki Y."/>
            <person name="Orlando V."/>
            <person name="Pang K.C."/>
            <person name="Pavan W.J."/>
            <person name="Pavesi G."/>
            <person name="Pesole G."/>
            <person name="Petrovsky N."/>
            <person name="Piazza S."/>
            <person name="Reed J."/>
            <person name="Reid J.F."/>
            <person name="Ring B.Z."/>
            <person name="Ringwald M."/>
            <person name="Rost B."/>
            <person name="Ruan Y."/>
            <person name="Salzberg S.L."/>
            <person name="Sandelin A."/>
            <person name="Schneider C."/>
            <person name="Schoenbach C."/>
            <person name="Sekiguchi K."/>
            <person name="Semple C.A."/>
            <person name="Seno S."/>
            <person name="Sessa L."/>
            <person name="Sheng Y."/>
            <person name="Shibata Y."/>
            <person name="Shimada H."/>
            <person name="Shimada K."/>
            <person name="Silva D."/>
            <person name="Sinclair B."/>
            <person name="Sperling S."/>
            <person name="Stupka E."/>
            <person name="Sugiura K."/>
            <person name="Sultana R."/>
            <person name="Takenaka Y."/>
            <person name="Taki K."/>
            <person name="Tammoja K."/>
            <person name="Tan S.L."/>
            <person name="Tang S."/>
            <person name="Taylor M.S."/>
            <person name="Tegner J."/>
            <person name="Teichmann S.A."/>
            <person name="Ueda H.R."/>
            <person name="van Nimwegen E."/>
            <person name="Verardo R."/>
            <person name="Wei C.L."/>
            <person name="Yagi K."/>
            <person name="Yamanishi H."/>
            <person name="Zabarovsky E."/>
            <person name="Zhu S."/>
            <person name="Zimmer A."/>
            <person name="Hide W."/>
            <person name="Bult C."/>
            <person name="Grimmond S.M."/>
            <person name="Teasdale R.D."/>
            <person name="Liu E.T."/>
            <person name="Brusic V."/>
            <person name="Quackenbush J."/>
            <person name="Wahlestedt C."/>
            <person name="Mattick J.S."/>
            <person name="Hume D.A."/>
            <person name="Kai C."/>
            <person name="Sasaki D."/>
            <person name="Tomaru Y."/>
            <person name="Fukuda S."/>
            <person name="Kanamori-Katayama M."/>
            <person name="Suzuki M."/>
            <person name="Aoki J."/>
            <person name="Arakawa T."/>
            <person name="Iida J."/>
            <person name="Imamura K."/>
            <person name="Itoh M."/>
            <person name="Kato T."/>
            <person name="Kawaji H."/>
            <person name="Kawagashira N."/>
            <person name="Kawashima T."/>
            <person name="Kojima M."/>
            <person name="Kondo S."/>
            <person name="Konno H."/>
            <person name="Nakano K."/>
            <person name="Ninomiya N."/>
            <person name="Nishio T."/>
            <person name="Okada M."/>
            <person name="Plessy C."/>
            <person name="Shibata K."/>
            <person name="Shiraki T."/>
            <person name="Suzuki S."/>
            <person name="Tagami M."/>
            <person name="Waki K."/>
            <person name="Watahiki A."/>
            <person name="Okamura-Oho Y."/>
            <person name="Suzuki H."/>
            <person name="Kawai J."/>
            <person name="Hayashizaki Y."/>
        </authorList>
    </citation>
    <scope>NUCLEOTIDE SEQUENCE [LARGE SCALE MRNA]</scope>
    <source>
        <strain>C57BL/6J</strain>
        <tissue>Urinary bladder</tissue>
    </source>
</reference>
<reference key="2">
    <citation type="journal article" date="1995" name="J. Biol. Chem.">
        <title>Association of aciculin with dystrophin and utrophin.</title>
        <authorList>
            <person name="Belkin A.M."/>
            <person name="Burridge K."/>
        </authorList>
    </citation>
    <scope>INTERACTION WITH DMD</scope>
    <scope>SUBCELLULAR LOCATION</scope>
</reference>
<reference key="3">
    <citation type="journal article" date="2007" name="Proc. Natl. Acad. Sci. U.S.A.">
        <title>Large-scale phosphorylation analysis of mouse liver.</title>
        <authorList>
            <person name="Villen J."/>
            <person name="Beausoleil S.A."/>
            <person name="Gerber S.A."/>
            <person name="Gygi S.P."/>
        </authorList>
    </citation>
    <scope>IDENTIFICATION BY MASS SPECTROMETRY [LARGE SCALE ANALYSIS]</scope>
    <source>
        <tissue>Liver</tissue>
    </source>
</reference>
<reference key="4">
    <citation type="journal article" date="2010" name="Cell">
        <title>A tissue-specific atlas of mouse protein phosphorylation and expression.</title>
        <authorList>
            <person name="Huttlin E.L."/>
            <person name="Jedrychowski M.P."/>
            <person name="Elias J.E."/>
            <person name="Goswami T."/>
            <person name="Rad R."/>
            <person name="Beausoleil S.A."/>
            <person name="Villen J."/>
            <person name="Haas W."/>
            <person name="Sowa M.E."/>
            <person name="Gygi S.P."/>
        </authorList>
    </citation>
    <scope>PHOSPHORYLATION [LARGE SCALE ANALYSIS] AT THR-120 AND SER-122</scope>
    <scope>IDENTIFICATION BY MASS SPECTROMETRY [LARGE SCALE ANALYSIS]</scope>
    <source>
        <tissue>Brain</tissue>
        <tissue>Brown adipose tissue</tissue>
        <tissue>Heart</tissue>
        <tissue>Kidney</tissue>
        <tissue>Liver</tissue>
        <tissue>Lung</tissue>
        <tissue>Spleen</tissue>
        <tissue>Testis</tissue>
    </source>
</reference>
<gene>
    <name evidence="6" type="primary">Pgm5</name>
</gene>
<protein>
    <recommendedName>
        <fullName evidence="5">Phosphoglucomutase-like protein 5</fullName>
    </recommendedName>
</protein>
<comment type="function">
    <text evidence="2">Component of adherens-type cell-cell and cell-matrix junctions. Has no phosphoglucomutase activity in vitro.</text>
</comment>
<comment type="subunit">
    <text evidence="1 4">Interacts with DMD/dystrophin; the interaction is direct (PubMed:7890770). Interacts with UTRN/utrophin (By similarity).</text>
</comment>
<comment type="subcellular location">
    <subcellularLocation>
        <location evidence="2">Cell junction</location>
        <location evidence="2">Adherens junction</location>
    </subcellularLocation>
    <subcellularLocation>
        <location evidence="2">Cytoplasm</location>
        <location evidence="2">Cytoskeleton</location>
    </subcellularLocation>
    <subcellularLocation>
        <location evidence="4">Cell membrane</location>
        <location evidence="4">Sarcolemma</location>
    </subcellularLocation>
    <text evidence="2">Concentrated in focal contacts at the ends of actin bundles, and associated with actin filaments.</text>
</comment>
<comment type="similarity">
    <text evidence="5">Belongs to the phosphohexose mutase family.</text>
</comment>
<comment type="sequence caution" evidence="5">
    <conflict type="erroneous initiation">
        <sequence resource="EMBL-CDS" id="BAC29083"/>
    </conflict>
</comment>
<accession>Q8BZF8</accession>
<feature type="chain" id="PRO_0000294064" description="Phosphoglucomutase-like protein 5">
    <location>
        <begin position="1"/>
        <end position="567"/>
    </location>
</feature>
<feature type="region of interest" description="Disordered" evidence="3">
    <location>
        <begin position="1"/>
        <end position="26"/>
    </location>
</feature>
<feature type="modified residue" description="Phosphothreonine" evidence="7">
    <location>
        <position position="120"/>
    </location>
</feature>
<feature type="modified residue" description="Phosphoserine" evidence="7">
    <location>
        <position position="122"/>
    </location>
</feature>
<keyword id="KW-0130">Cell adhesion</keyword>
<keyword id="KW-0965">Cell junction</keyword>
<keyword id="KW-1003">Cell membrane</keyword>
<keyword id="KW-0963">Cytoplasm</keyword>
<keyword id="KW-0206">Cytoskeleton</keyword>
<keyword id="KW-0472">Membrane</keyword>
<keyword id="KW-0597">Phosphoprotein</keyword>
<keyword id="KW-1185">Reference proteome</keyword>
<dbReference type="EMBL" id="AK035507">
    <property type="protein sequence ID" value="BAC29083.1"/>
    <property type="status" value="ALT_INIT"/>
    <property type="molecule type" value="mRNA"/>
</dbReference>
<dbReference type="CCDS" id="CCDS29714.1"/>
<dbReference type="RefSeq" id="NP_778178.3">
    <property type="nucleotide sequence ID" value="NM_175013.2"/>
</dbReference>
<dbReference type="SMR" id="Q8BZF8"/>
<dbReference type="BioGRID" id="230463">
    <property type="interactions" value="2"/>
</dbReference>
<dbReference type="FunCoup" id="Q8BZF8">
    <property type="interactions" value="84"/>
</dbReference>
<dbReference type="IntAct" id="Q8BZF8">
    <property type="interactions" value="1"/>
</dbReference>
<dbReference type="STRING" id="10090.ENSMUSP00000036025"/>
<dbReference type="GlyGen" id="Q8BZF8">
    <property type="glycosylation" value="1 site, 1 O-linked glycan (1 site)"/>
</dbReference>
<dbReference type="iPTMnet" id="Q8BZF8"/>
<dbReference type="PhosphoSitePlus" id="Q8BZF8"/>
<dbReference type="jPOST" id="Q8BZF8"/>
<dbReference type="PaxDb" id="10090-ENSMUSP00000036025"/>
<dbReference type="PeptideAtlas" id="Q8BZF8"/>
<dbReference type="ProteomicsDB" id="287691"/>
<dbReference type="Pumba" id="Q8BZF8"/>
<dbReference type="Antibodypedia" id="26751">
    <property type="antibodies" value="125 antibodies from 20 providers"/>
</dbReference>
<dbReference type="DNASU" id="226041"/>
<dbReference type="Ensembl" id="ENSMUST00000047666.5">
    <property type="protein sequence ID" value="ENSMUSP00000036025.5"/>
    <property type="gene ID" value="ENSMUSG00000041731.14"/>
</dbReference>
<dbReference type="GeneID" id="226041"/>
<dbReference type="KEGG" id="mmu:226041"/>
<dbReference type="UCSC" id="uc008has.1">
    <property type="organism name" value="mouse"/>
</dbReference>
<dbReference type="AGR" id="MGI:1925668"/>
<dbReference type="CTD" id="5239"/>
<dbReference type="MGI" id="MGI:1925668">
    <property type="gene designation" value="Pgm5"/>
</dbReference>
<dbReference type="VEuPathDB" id="HostDB:ENSMUSG00000041731"/>
<dbReference type="eggNOG" id="KOG0625">
    <property type="taxonomic scope" value="Eukaryota"/>
</dbReference>
<dbReference type="GeneTree" id="ENSGT00940000158126"/>
<dbReference type="HOGENOM" id="CLU_009330_0_1_1"/>
<dbReference type="InParanoid" id="Q8BZF8"/>
<dbReference type="OMA" id="YIPDYAG"/>
<dbReference type="OrthoDB" id="2291at2759"/>
<dbReference type="PhylomeDB" id="Q8BZF8"/>
<dbReference type="TreeFam" id="TF300350"/>
<dbReference type="BioGRID-ORCS" id="226041">
    <property type="hits" value="2 hits in 78 CRISPR screens"/>
</dbReference>
<dbReference type="ChiTaRS" id="Pgm5">
    <property type="organism name" value="mouse"/>
</dbReference>
<dbReference type="PRO" id="PR:Q8BZF8"/>
<dbReference type="Proteomes" id="UP000000589">
    <property type="component" value="Chromosome 19"/>
</dbReference>
<dbReference type="RNAct" id="Q8BZF8">
    <property type="molecule type" value="protein"/>
</dbReference>
<dbReference type="Bgee" id="ENSMUSG00000041731">
    <property type="expression patterns" value="Expressed in interventricular septum and 151 other cell types or tissues"/>
</dbReference>
<dbReference type="GO" id="GO:0005912">
    <property type="term" value="C:adherens junction"/>
    <property type="evidence" value="ECO:0000266"/>
    <property type="project" value="MGI"/>
</dbReference>
<dbReference type="GO" id="GO:0030055">
    <property type="term" value="C:cell-substrate junction"/>
    <property type="evidence" value="ECO:0000314"/>
    <property type="project" value="MGI"/>
</dbReference>
<dbReference type="GO" id="GO:0043034">
    <property type="term" value="C:costamere"/>
    <property type="evidence" value="ECO:0007669"/>
    <property type="project" value="Ensembl"/>
</dbReference>
<dbReference type="GO" id="GO:0009898">
    <property type="term" value="C:cytoplasmic side of plasma membrane"/>
    <property type="evidence" value="ECO:0007669"/>
    <property type="project" value="Ensembl"/>
</dbReference>
<dbReference type="GO" id="GO:0016010">
    <property type="term" value="C:dystrophin-associated glycoprotein complex"/>
    <property type="evidence" value="ECO:0000314"/>
    <property type="project" value="MGI"/>
</dbReference>
<dbReference type="GO" id="GO:0005925">
    <property type="term" value="C:focal adhesion"/>
    <property type="evidence" value="ECO:0007669"/>
    <property type="project" value="Ensembl"/>
</dbReference>
<dbReference type="GO" id="GO:0014704">
    <property type="term" value="C:intercalated disc"/>
    <property type="evidence" value="ECO:0007669"/>
    <property type="project" value="Ensembl"/>
</dbReference>
<dbReference type="GO" id="GO:0042383">
    <property type="term" value="C:sarcolemma"/>
    <property type="evidence" value="ECO:0000314"/>
    <property type="project" value="MGI"/>
</dbReference>
<dbReference type="GO" id="GO:0005914">
    <property type="term" value="C:spot adherens junction"/>
    <property type="evidence" value="ECO:0007669"/>
    <property type="project" value="Ensembl"/>
</dbReference>
<dbReference type="GO" id="GO:0001725">
    <property type="term" value="C:stress fiber"/>
    <property type="evidence" value="ECO:0007669"/>
    <property type="project" value="Ensembl"/>
</dbReference>
<dbReference type="GO" id="GO:0030018">
    <property type="term" value="C:Z disc"/>
    <property type="evidence" value="ECO:0000314"/>
    <property type="project" value="MGI"/>
</dbReference>
<dbReference type="GO" id="GO:0000287">
    <property type="term" value="F:magnesium ion binding"/>
    <property type="evidence" value="ECO:0007669"/>
    <property type="project" value="InterPro"/>
</dbReference>
<dbReference type="GO" id="GO:0005975">
    <property type="term" value="P:carbohydrate metabolic process"/>
    <property type="evidence" value="ECO:0007669"/>
    <property type="project" value="InterPro"/>
</dbReference>
<dbReference type="GO" id="GO:0007155">
    <property type="term" value="P:cell adhesion"/>
    <property type="evidence" value="ECO:0007669"/>
    <property type="project" value="UniProtKB-KW"/>
</dbReference>
<dbReference type="FunFam" id="3.30.310.50:FF:000002">
    <property type="entry name" value="Phosphoglucomutase 5"/>
    <property type="match status" value="1"/>
</dbReference>
<dbReference type="FunFam" id="3.40.120.10:FF:000004">
    <property type="entry name" value="Phosphoglucomutase 5"/>
    <property type="match status" value="1"/>
</dbReference>
<dbReference type="FunFam" id="3.40.120.10:FF:000005">
    <property type="entry name" value="Phosphoglucomutase 5"/>
    <property type="match status" value="1"/>
</dbReference>
<dbReference type="FunFam" id="3.40.120.10:FF:000007">
    <property type="entry name" value="Phosphoglucomutase 5"/>
    <property type="match status" value="1"/>
</dbReference>
<dbReference type="Gene3D" id="3.40.120.10">
    <property type="entry name" value="Alpha-D-Glucose-1,6-Bisphosphate, subunit A, domain 3"/>
    <property type="match status" value="3"/>
</dbReference>
<dbReference type="Gene3D" id="3.30.310.50">
    <property type="entry name" value="Alpha-D-phosphohexomutase, C-terminal domain"/>
    <property type="match status" value="1"/>
</dbReference>
<dbReference type="InterPro" id="IPR005844">
    <property type="entry name" value="A-D-PHexomutase_a/b/a-I"/>
</dbReference>
<dbReference type="InterPro" id="IPR016055">
    <property type="entry name" value="A-D-PHexomutase_a/b/a-I/II/III"/>
</dbReference>
<dbReference type="InterPro" id="IPR005845">
    <property type="entry name" value="A-D-PHexomutase_a/b/a-II"/>
</dbReference>
<dbReference type="InterPro" id="IPR005846">
    <property type="entry name" value="A-D-PHexomutase_a/b/a-III"/>
</dbReference>
<dbReference type="InterPro" id="IPR036900">
    <property type="entry name" value="A-D-PHexomutase_C_sf"/>
</dbReference>
<dbReference type="InterPro" id="IPR016066">
    <property type="entry name" value="A-D-PHexomutase_CS"/>
</dbReference>
<dbReference type="InterPro" id="IPR005841">
    <property type="entry name" value="Alpha-D-phosphohexomutase_SF"/>
</dbReference>
<dbReference type="InterPro" id="IPR045244">
    <property type="entry name" value="PGM"/>
</dbReference>
<dbReference type="NCBIfam" id="NF005737">
    <property type="entry name" value="PRK07564.1-1"/>
    <property type="match status" value="1"/>
</dbReference>
<dbReference type="PANTHER" id="PTHR22573:SF27">
    <property type="entry name" value="PHOSPHOGLUCOMUTASE-LIKE PROTEIN 5"/>
    <property type="match status" value="1"/>
</dbReference>
<dbReference type="PANTHER" id="PTHR22573">
    <property type="entry name" value="PHOSPHOHEXOMUTASE FAMILY MEMBER"/>
    <property type="match status" value="1"/>
</dbReference>
<dbReference type="Pfam" id="PF24947">
    <property type="entry name" value="PGM1_C_vert_fung"/>
    <property type="match status" value="1"/>
</dbReference>
<dbReference type="Pfam" id="PF02878">
    <property type="entry name" value="PGM_PMM_I"/>
    <property type="match status" value="1"/>
</dbReference>
<dbReference type="Pfam" id="PF02879">
    <property type="entry name" value="PGM_PMM_II"/>
    <property type="match status" value="1"/>
</dbReference>
<dbReference type="Pfam" id="PF02880">
    <property type="entry name" value="PGM_PMM_III"/>
    <property type="match status" value="1"/>
</dbReference>
<dbReference type="PRINTS" id="PR00509">
    <property type="entry name" value="PGMPMM"/>
</dbReference>
<dbReference type="SUPFAM" id="SSF55957">
    <property type="entry name" value="Phosphoglucomutase, C-terminal domain"/>
    <property type="match status" value="1"/>
</dbReference>
<dbReference type="SUPFAM" id="SSF53738">
    <property type="entry name" value="Phosphoglucomutase, first 3 domains"/>
    <property type="match status" value="3"/>
</dbReference>
<dbReference type="PROSITE" id="PS00710">
    <property type="entry name" value="PGM_PMM"/>
    <property type="match status" value="1"/>
</dbReference>
<dbReference type="PROSITE" id="PS00134">
    <property type="entry name" value="TRYPSIN_HIS"/>
    <property type="match status" value="1"/>
</dbReference>
<sequence length="567" mass="62220">MEGSPIPVLTVPTAPYEDQRPTGGGGLRRPTGLFEGQRNYLPNFIQSVLSSIDLRDRQGCTMVVGSDGRYFSRTATEIVVQMAAANGIGRLIIGQNGILSTPAVSCIIRKIKAAGGIILTASHCPGGPGGEFGVKFNVANGGPAPDVVSDKIYQISKTIEEYAICPDLRIDLSRLGRQEFDLENKFKPFRVEIVDPVDIYLNLLRNIFDFNAIKSLLTGPSQLKIRVDAMHGVMGPYVRKVLCDELGAPANSAINCVPLEDFGGQHPDPNLTYATTLLEAMKGGEYGFGAAFDADGDRYMILGQNGFFVSPSDSLAIIAANLSCIPYFRQMGVRGFGRSMPTSTALDRVAKSMKVPVYETPAGWRFFSNLMDSGRCSLCGEESFGTGSDHLREKDGLWAVLVWLSIIAARKQSVEEIVRDHWAKYGRHYYCRFDYEGLEPKATYYIMRDLEALVTDKSFIGQQFAVGSHIYSIAKTDSFEYVDPVDGTVTKKQGLRIIFSDASRLIFRLSSSSGVRATIRLYAESYERDPSGHDQEPQAVLSPLIAIALKISQIHERTGRRGPTVIT</sequence>
<evidence type="ECO:0000250" key="1">
    <source>
        <dbReference type="UniProtKB" id="D3ZVR9"/>
    </source>
</evidence>
<evidence type="ECO:0000250" key="2">
    <source>
        <dbReference type="UniProtKB" id="Q15124"/>
    </source>
</evidence>
<evidence type="ECO:0000256" key="3">
    <source>
        <dbReference type="SAM" id="MobiDB-lite"/>
    </source>
</evidence>
<evidence type="ECO:0000269" key="4">
    <source>
    </source>
</evidence>
<evidence type="ECO:0000305" key="5"/>
<evidence type="ECO:0000312" key="6">
    <source>
        <dbReference type="MGI" id="MGI:1925668"/>
    </source>
</evidence>
<evidence type="ECO:0007744" key="7">
    <source>
    </source>
</evidence>
<proteinExistence type="evidence at protein level"/>
<organism>
    <name type="scientific">Mus musculus</name>
    <name type="common">Mouse</name>
    <dbReference type="NCBI Taxonomy" id="10090"/>
    <lineage>
        <taxon>Eukaryota</taxon>
        <taxon>Metazoa</taxon>
        <taxon>Chordata</taxon>
        <taxon>Craniata</taxon>
        <taxon>Vertebrata</taxon>
        <taxon>Euteleostomi</taxon>
        <taxon>Mammalia</taxon>
        <taxon>Eutheria</taxon>
        <taxon>Euarchontoglires</taxon>
        <taxon>Glires</taxon>
        <taxon>Rodentia</taxon>
        <taxon>Myomorpha</taxon>
        <taxon>Muroidea</taxon>
        <taxon>Muridae</taxon>
        <taxon>Murinae</taxon>
        <taxon>Mus</taxon>
        <taxon>Mus</taxon>
    </lineage>
</organism>
<name>PGM5_MOUSE</name>